<keyword id="KW-1185">Reference proteome</keyword>
<keyword id="KW-1171">Viral genome ejection through host cell envelope</keyword>
<keyword id="KW-1162">Viral penetration into host cytoplasm</keyword>
<keyword id="KW-1160">Virus entry into host cell</keyword>
<evidence type="ECO:0000250" key="1"/>
<evidence type="ECO:0000256" key="2">
    <source>
        <dbReference type="SAM" id="MobiDB-lite"/>
    </source>
</evidence>
<evidence type="ECO:0000305" key="3"/>
<sequence length="229" mass="23228">MLYAFKLGRKLRGEEPLYPEKGGKGGSSSSGAKEAARATQYAADLQNQQFNRVMEQLAPYAAAGLPALQQIQQLSTLEGQNSALNQYYNSDQYKQLADQARYQSLNAAEATGGLGSTATSNQIASIAPTLGQNWLSGQMQNYGNLLNVGQSAAAGQASAGQNYANNAGNLAQQMAAIRSQGSGQSTLGSAISGGTSGALAGAGLAGMLGASTPWGAGIGAGIGLLGSLF</sequence>
<comment type="function">
    <text evidence="1">Component of the phage injection machinery. Required for injection of the phage DNA into the host (By similarity).</text>
</comment>
<comment type="similarity">
    <text evidence="3">Belongs to the podoviruses gp7 family.</text>
</comment>
<name>VG07_BPST6</name>
<reference key="1">
    <citation type="journal article" date="2003" name="J. Bacteriol.">
        <title>Genomic structure of the Salmonella enterica serovar typhimurium DT 64 bacteriophage ST64T: evidence for modular genetic architecture.</title>
        <authorList>
            <person name="Mmolawa P.T."/>
            <person name="Schmieger H."/>
            <person name="Tucker C.P."/>
            <person name="Heuzenroeder M.W."/>
        </authorList>
    </citation>
    <scope>NUCLEOTIDE SEQUENCE [LARGE SCALE GENOMIC DNA]</scope>
</reference>
<dbReference type="EMBL" id="AY052766">
    <property type="protein sequence ID" value="AAL15533.1"/>
    <property type="molecule type" value="Genomic_DNA"/>
</dbReference>
<dbReference type="RefSeq" id="NP_720335.1">
    <property type="nucleotide sequence ID" value="NC_004348.1"/>
</dbReference>
<dbReference type="SMR" id="Q8HAD9"/>
<dbReference type="KEGG" id="vg:955786"/>
<dbReference type="OrthoDB" id="14605at10239"/>
<dbReference type="Proteomes" id="UP000001158">
    <property type="component" value="Segment"/>
</dbReference>
<dbReference type="GO" id="GO:0046718">
    <property type="term" value="P:symbiont entry into host cell"/>
    <property type="evidence" value="ECO:0007669"/>
    <property type="project" value="UniProtKB-KW"/>
</dbReference>
<protein>
    <recommendedName>
        <fullName>DNA transfer protein gp7</fullName>
    </recommendedName>
</protein>
<gene>
    <name type="primary">7</name>
</gene>
<organismHost>
    <name type="scientific">Salmonella typhimurium</name>
    <dbReference type="NCBI Taxonomy" id="90371"/>
</organismHost>
<organism>
    <name type="scientific">Salmonella phage ST64T</name>
    <name type="common">Bacteriophage ST64T</name>
    <dbReference type="NCBI Taxonomy" id="173443"/>
    <lineage>
        <taxon>Viruses</taxon>
        <taxon>Duplodnaviria</taxon>
        <taxon>Heunggongvirae</taxon>
        <taxon>Uroviricota</taxon>
        <taxon>Caudoviricetes</taxon>
        <taxon>Lederbergvirus</taxon>
    </lineage>
</organism>
<proteinExistence type="inferred from homology"/>
<accession>Q8HAD9</accession>
<feature type="chain" id="PRO_0000077754" description="DNA transfer protein gp7">
    <location>
        <begin position="1"/>
        <end position="229"/>
    </location>
</feature>
<feature type="region of interest" description="Disordered" evidence="2">
    <location>
        <begin position="14"/>
        <end position="36"/>
    </location>
</feature>